<feature type="chain" id="PRO_0000127611" description="DASH complex subunit dad1">
    <location>
        <begin position="1"/>
        <end position="90"/>
    </location>
</feature>
<evidence type="ECO:0000250" key="1">
    <source>
        <dbReference type="UniProtKB" id="Q12248"/>
    </source>
</evidence>
<evidence type="ECO:0000269" key="2">
    <source>
    </source>
</evidence>
<evidence type="ECO:0000269" key="3">
    <source>
    </source>
</evidence>
<evidence type="ECO:0000269" key="4">
    <source>
    </source>
</evidence>
<evidence type="ECO:0000269" key="5">
    <source>
    </source>
</evidence>
<evidence type="ECO:0000305" key="6"/>
<evidence type="ECO:0000305" key="7">
    <source>
    </source>
</evidence>
<sequence length="90" mass="10523">MSSENMDITENIQNEQNKDFDDIDFERRRRLLTLQISKSMNEVVNLMSALNKNLESINGVGKEFENVASLWKEFQNSVLQKKDREMLDAP</sequence>
<keyword id="KW-0131">Cell cycle</keyword>
<keyword id="KW-0132">Cell division</keyword>
<keyword id="KW-0137">Centromere</keyword>
<keyword id="KW-0158">Chromosome</keyword>
<keyword id="KW-0159">Chromosome partition</keyword>
<keyword id="KW-0963">Cytoplasm</keyword>
<keyword id="KW-0206">Cytoskeleton</keyword>
<keyword id="KW-0995">Kinetochore</keyword>
<keyword id="KW-0493">Microtubule</keyword>
<keyword id="KW-0498">Mitosis</keyword>
<keyword id="KW-0539">Nucleus</keyword>
<keyword id="KW-1185">Reference proteome</keyword>
<gene>
    <name type="primary">dad1</name>
    <name type="ORF">SPAC16A10.05c</name>
</gene>
<name>DAD1_SCHPO</name>
<protein>
    <recommendedName>
        <fullName>DASH complex subunit dad1</fullName>
    </recommendedName>
    <alternativeName>
        <fullName>Outer kinetochore protein dad1</fullName>
    </alternativeName>
</protein>
<dbReference type="EMBL" id="CU329670">
    <property type="protein sequence ID" value="CAB09998.2"/>
    <property type="molecule type" value="Genomic_DNA"/>
</dbReference>
<dbReference type="PIR" id="T37770">
    <property type="entry name" value="T37770"/>
</dbReference>
<dbReference type="RefSeq" id="NP_594045.2">
    <property type="nucleotide sequence ID" value="NM_001019470.2"/>
</dbReference>
<dbReference type="SMR" id="P87297"/>
<dbReference type="BioGRID" id="278777">
    <property type="interactions" value="295"/>
</dbReference>
<dbReference type="ComplexPortal" id="CPX-10081">
    <property type="entry name" value="DASH complex"/>
</dbReference>
<dbReference type="FunCoup" id="P87297">
    <property type="interactions" value="3"/>
</dbReference>
<dbReference type="IntAct" id="P87297">
    <property type="interactions" value="1"/>
</dbReference>
<dbReference type="STRING" id="284812.P87297"/>
<dbReference type="iPTMnet" id="P87297"/>
<dbReference type="PaxDb" id="4896-SPAC16A10.05c.1"/>
<dbReference type="EnsemblFungi" id="SPAC16A10.05c.1">
    <property type="protein sequence ID" value="SPAC16A10.05c.1:pep"/>
    <property type="gene ID" value="SPAC16A10.05c"/>
</dbReference>
<dbReference type="GeneID" id="2542311"/>
<dbReference type="KEGG" id="spo:2542311"/>
<dbReference type="PomBase" id="SPAC16A10.05c">
    <property type="gene designation" value="dad1"/>
</dbReference>
<dbReference type="VEuPathDB" id="FungiDB:SPAC16A10.05c"/>
<dbReference type="eggNOG" id="ENOG502SBWQ">
    <property type="taxonomic scope" value="Eukaryota"/>
</dbReference>
<dbReference type="HOGENOM" id="CLU_2639490_0_0_1"/>
<dbReference type="InParanoid" id="P87297"/>
<dbReference type="PRO" id="PR:P87297"/>
<dbReference type="Proteomes" id="UP000002485">
    <property type="component" value="Chromosome I"/>
</dbReference>
<dbReference type="GO" id="GO:0000779">
    <property type="term" value="C:condensed chromosome, centromeric region"/>
    <property type="evidence" value="ECO:0000314"/>
    <property type="project" value="PomBase"/>
</dbReference>
<dbReference type="GO" id="GO:0005829">
    <property type="term" value="C:cytosol"/>
    <property type="evidence" value="ECO:0007005"/>
    <property type="project" value="PomBase"/>
</dbReference>
<dbReference type="GO" id="GO:0042729">
    <property type="term" value="C:DASH complex"/>
    <property type="evidence" value="ECO:0000314"/>
    <property type="project" value="PomBase"/>
</dbReference>
<dbReference type="GO" id="GO:0072686">
    <property type="term" value="C:mitotic spindle"/>
    <property type="evidence" value="ECO:0007005"/>
    <property type="project" value="PomBase"/>
</dbReference>
<dbReference type="GO" id="GO:0044732">
    <property type="term" value="C:mitotic spindle pole body"/>
    <property type="evidence" value="ECO:0000314"/>
    <property type="project" value="PomBase"/>
</dbReference>
<dbReference type="GO" id="GO:0005634">
    <property type="term" value="C:nucleus"/>
    <property type="evidence" value="ECO:0007005"/>
    <property type="project" value="PomBase"/>
</dbReference>
<dbReference type="GO" id="GO:0000940">
    <property type="term" value="C:outer kinetochore"/>
    <property type="evidence" value="ECO:0000314"/>
    <property type="project" value="PomBase"/>
</dbReference>
<dbReference type="GO" id="GO:0005876">
    <property type="term" value="C:spindle microtubule"/>
    <property type="evidence" value="ECO:0000314"/>
    <property type="project" value="PomBase"/>
</dbReference>
<dbReference type="GO" id="GO:0008608">
    <property type="term" value="P:attachment of spindle microtubules to kinetochore"/>
    <property type="evidence" value="ECO:0000250"/>
    <property type="project" value="UniProtKB"/>
</dbReference>
<dbReference type="GO" id="GO:0051301">
    <property type="term" value="P:cell division"/>
    <property type="evidence" value="ECO:0007669"/>
    <property type="project" value="UniProtKB-KW"/>
</dbReference>
<dbReference type="GO" id="GO:1990758">
    <property type="term" value="P:mitotic sister chromatid biorientation"/>
    <property type="evidence" value="ECO:0000269"/>
    <property type="project" value="UniProtKB"/>
</dbReference>
<dbReference type="GO" id="GO:1990976">
    <property type="term" value="P:protein transport along microtubule to mitotic spindle pole body"/>
    <property type="evidence" value="ECO:0000250"/>
    <property type="project" value="UniProtKB"/>
</dbReference>
<dbReference type="GO" id="GO:0051455">
    <property type="term" value="P:spindle attachment to meiosis I kinetochore"/>
    <property type="evidence" value="ECO:0000305"/>
    <property type="project" value="PomBase"/>
</dbReference>
<dbReference type="InterPro" id="IPR013958">
    <property type="entry name" value="DASH_Dad1"/>
</dbReference>
<dbReference type="PANTHER" id="PTHR28025">
    <property type="entry name" value="DASH COMPLEX SUBUNIT DAD1"/>
    <property type="match status" value="1"/>
</dbReference>
<dbReference type="PANTHER" id="PTHR28025:SF1">
    <property type="entry name" value="DASH COMPLEX SUBUNIT DAD1"/>
    <property type="match status" value="1"/>
</dbReference>
<dbReference type="Pfam" id="PF08649">
    <property type="entry name" value="DASH_Dad1"/>
    <property type="match status" value="1"/>
</dbReference>
<accession>P87297</accession>
<reference key="1">
    <citation type="journal article" date="2002" name="Nature">
        <title>The genome sequence of Schizosaccharomyces pombe.</title>
        <authorList>
            <person name="Wood V."/>
            <person name="Gwilliam R."/>
            <person name="Rajandream M.A."/>
            <person name="Lyne M.H."/>
            <person name="Lyne R."/>
            <person name="Stewart A."/>
            <person name="Sgouros J.G."/>
            <person name="Peat N."/>
            <person name="Hayles J."/>
            <person name="Baker S.G."/>
            <person name="Basham D."/>
            <person name="Bowman S."/>
            <person name="Brooks K."/>
            <person name="Brown D."/>
            <person name="Brown S."/>
            <person name="Chillingworth T."/>
            <person name="Churcher C.M."/>
            <person name="Collins M."/>
            <person name="Connor R."/>
            <person name="Cronin A."/>
            <person name="Davis P."/>
            <person name="Feltwell T."/>
            <person name="Fraser A."/>
            <person name="Gentles S."/>
            <person name="Goble A."/>
            <person name="Hamlin N."/>
            <person name="Harris D.E."/>
            <person name="Hidalgo J."/>
            <person name="Hodgson G."/>
            <person name="Holroyd S."/>
            <person name="Hornsby T."/>
            <person name="Howarth S."/>
            <person name="Huckle E.J."/>
            <person name="Hunt S."/>
            <person name="Jagels K."/>
            <person name="James K.D."/>
            <person name="Jones L."/>
            <person name="Jones M."/>
            <person name="Leather S."/>
            <person name="McDonald S."/>
            <person name="McLean J."/>
            <person name="Mooney P."/>
            <person name="Moule S."/>
            <person name="Mungall K.L."/>
            <person name="Murphy L.D."/>
            <person name="Niblett D."/>
            <person name="Odell C."/>
            <person name="Oliver K."/>
            <person name="O'Neil S."/>
            <person name="Pearson D."/>
            <person name="Quail M.A."/>
            <person name="Rabbinowitsch E."/>
            <person name="Rutherford K.M."/>
            <person name="Rutter S."/>
            <person name="Saunders D."/>
            <person name="Seeger K."/>
            <person name="Sharp S."/>
            <person name="Skelton J."/>
            <person name="Simmonds M.N."/>
            <person name="Squares R."/>
            <person name="Squares S."/>
            <person name="Stevens K."/>
            <person name="Taylor K."/>
            <person name="Taylor R.G."/>
            <person name="Tivey A."/>
            <person name="Walsh S.V."/>
            <person name="Warren T."/>
            <person name="Whitehead S."/>
            <person name="Woodward J.R."/>
            <person name="Volckaert G."/>
            <person name="Aert R."/>
            <person name="Robben J."/>
            <person name="Grymonprez B."/>
            <person name="Weltjens I."/>
            <person name="Vanstreels E."/>
            <person name="Rieger M."/>
            <person name="Schaefer M."/>
            <person name="Mueller-Auer S."/>
            <person name="Gabel C."/>
            <person name="Fuchs M."/>
            <person name="Duesterhoeft A."/>
            <person name="Fritzc C."/>
            <person name="Holzer E."/>
            <person name="Moestl D."/>
            <person name="Hilbert H."/>
            <person name="Borzym K."/>
            <person name="Langer I."/>
            <person name="Beck A."/>
            <person name="Lehrach H."/>
            <person name="Reinhardt R."/>
            <person name="Pohl T.M."/>
            <person name="Eger P."/>
            <person name="Zimmermann W."/>
            <person name="Wedler H."/>
            <person name="Wambutt R."/>
            <person name="Purnelle B."/>
            <person name="Goffeau A."/>
            <person name="Cadieu E."/>
            <person name="Dreano S."/>
            <person name="Gloux S."/>
            <person name="Lelaure V."/>
            <person name="Mottier S."/>
            <person name="Galibert F."/>
            <person name="Aves S.J."/>
            <person name="Xiang Z."/>
            <person name="Hunt C."/>
            <person name="Moore K."/>
            <person name="Hurst S.M."/>
            <person name="Lucas M."/>
            <person name="Rochet M."/>
            <person name="Gaillardin C."/>
            <person name="Tallada V.A."/>
            <person name="Garzon A."/>
            <person name="Thode G."/>
            <person name="Daga R.R."/>
            <person name="Cruzado L."/>
            <person name="Jimenez J."/>
            <person name="Sanchez M."/>
            <person name="del Rey F."/>
            <person name="Benito J."/>
            <person name="Dominguez A."/>
            <person name="Revuelta J.L."/>
            <person name="Moreno S."/>
            <person name="Armstrong J."/>
            <person name="Forsburg S.L."/>
            <person name="Cerutti L."/>
            <person name="Lowe T."/>
            <person name="McCombie W.R."/>
            <person name="Paulsen I."/>
            <person name="Potashkin J."/>
            <person name="Shpakovski G.V."/>
            <person name="Ussery D."/>
            <person name="Barrell B.G."/>
            <person name="Nurse P."/>
        </authorList>
    </citation>
    <scope>NUCLEOTIDE SEQUENCE [LARGE SCALE GENOMIC DNA]</scope>
    <source>
        <strain>972 / ATCC 24843</strain>
    </source>
</reference>
<reference key="2">
    <citation type="journal article" date="2011" name="Science">
        <title>Comparative functional genomics of the fission yeasts.</title>
        <authorList>
            <person name="Rhind N."/>
            <person name="Chen Z."/>
            <person name="Yassour M."/>
            <person name="Thompson D.A."/>
            <person name="Haas B.J."/>
            <person name="Habib N."/>
            <person name="Wapinski I."/>
            <person name="Roy S."/>
            <person name="Lin M.F."/>
            <person name="Heiman D.I."/>
            <person name="Young S.K."/>
            <person name="Furuya K."/>
            <person name="Guo Y."/>
            <person name="Pidoux A."/>
            <person name="Chen H.M."/>
            <person name="Robbertse B."/>
            <person name="Goldberg J.M."/>
            <person name="Aoki K."/>
            <person name="Bayne E.H."/>
            <person name="Berlin A.M."/>
            <person name="Desjardins C.A."/>
            <person name="Dobbs E."/>
            <person name="Dukaj L."/>
            <person name="Fan L."/>
            <person name="FitzGerald M.G."/>
            <person name="French C."/>
            <person name="Gujja S."/>
            <person name="Hansen K."/>
            <person name="Keifenheim D."/>
            <person name="Levin J.Z."/>
            <person name="Mosher R.A."/>
            <person name="Mueller C.A."/>
            <person name="Pfiffner J."/>
            <person name="Priest M."/>
            <person name="Russ C."/>
            <person name="Smialowska A."/>
            <person name="Swoboda P."/>
            <person name="Sykes S.M."/>
            <person name="Vaughn M."/>
            <person name="Vengrova S."/>
            <person name="Yoder R."/>
            <person name="Zeng Q."/>
            <person name="Allshire R."/>
            <person name="Baulcombe D."/>
            <person name="Birren B.W."/>
            <person name="Brown W."/>
            <person name="Ekwall K."/>
            <person name="Kellis M."/>
            <person name="Leatherwood J."/>
            <person name="Levin H."/>
            <person name="Margalit H."/>
            <person name="Martienssen R."/>
            <person name="Nieduszynski C.A."/>
            <person name="Spatafora J.W."/>
            <person name="Friedman N."/>
            <person name="Dalgaard J.Z."/>
            <person name="Baumann P."/>
            <person name="Niki H."/>
            <person name="Regev A."/>
            <person name="Nusbaum C."/>
        </authorList>
    </citation>
    <scope>REVISION OF GENE MODEL</scope>
</reference>
<reference key="3">
    <citation type="journal article" date="2005" name="EMBO J.">
        <title>Molecular analysis of kinetochore architecture in fission yeast.</title>
        <authorList>
            <person name="Liu X."/>
            <person name="McLeod I."/>
            <person name="Anderson S."/>
            <person name="Yates J.R. III"/>
            <person name="He X."/>
        </authorList>
    </citation>
    <scope>FUNCTION</scope>
    <scope>IDENTIFICATION IN THE DASH COMPLEX</scope>
    <scope>INTERACTION WITH SIM4</scope>
    <scope>SUBCELLULAR LOCATION</scope>
</reference>
<reference key="4">
    <citation type="journal article" date="2005" name="EMBO J.">
        <title>The DASH complex and Klp5/Klp6 kinesin coordinate bipolar chromosome attachment in fission yeast.</title>
        <authorList>
            <person name="Sanchez-Perez I."/>
            <person name="Renwick S.J."/>
            <person name="Crawley K."/>
            <person name="Karig I."/>
            <person name="Buck V."/>
            <person name="Meadows J.C."/>
            <person name="Franco-Sanchez A."/>
            <person name="Fleig U."/>
            <person name="Toda T."/>
            <person name="Millar J.B."/>
        </authorList>
    </citation>
    <scope>FUNCTION</scope>
    <scope>SUBCELLULAR LOCATION</scope>
</reference>
<reference key="5">
    <citation type="journal article" date="2006" name="Nat. Biotechnol.">
        <title>ORFeome cloning and global analysis of protein localization in the fission yeast Schizosaccharomyces pombe.</title>
        <authorList>
            <person name="Matsuyama A."/>
            <person name="Arai R."/>
            <person name="Yashiroda Y."/>
            <person name="Shirai A."/>
            <person name="Kamata A."/>
            <person name="Sekido S."/>
            <person name="Kobayashi Y."/>
            <person name="Hashimoto A."/>
            <person name="Hamamoto M."/>
            <person name="Hiraoka Y."/>
            <person name="Horinouchi S."/>
            <person name="Yoshida M."/>
        </authorList>
    </citation>
    <scope>SUBCELLULAR LOCATION [LARGE SCALE ANALYSIS]</scope>
</reference>
<reference key="6">
    <citation type="journal article" date="2008" name="Mol. Biol. Cell">
        <title>Sister kinetochore recapture in fission yeast occurs by two distinct mechanisms, both requiring Dam1 and Klp2.</title>
        <authorList>
            <person name="Gachet Y."/>
            <person name="Reyes C."/>
            <person name="Courtheoux T."/>
            <person name="Goldstone S."/>
            <person name="Gay G."/>
            <person name="Serrurier C."/>
            <person name="Tournier S."/>
        </authorList>
    </citation>
    <scope>FUNCTION</scope>
</reference>
<reference key="7">
    <citation type="journal article" date="2010" name="Proc. Natl. Acad. Sci. U.S.A.">
        <title>A non-ring-like form of the Dam1 complex modulates microtubule dynamics in fission yeast.</title>
        <authorList>
            <person name="Gao Q."/>
            <person name="Courtheoux T."/>
            <person name="Gachet Y."/>
            <person name="Tournier S."/>
            <person name="He X."/>
        </authorList>
    </citation>
    <scope>FUNCTION</scope>
    <scope>SUBUNIT</scope>
    <scope>SUBCELLULAR LOCATION</scope>
</reference>
<comment type="function">
    <text evidence="2 3 4 5">Component of the DASH complex that connects microtubules with kinetochores and couples microtubule depolymerisation to chromosome movement; it is involved in retrieving kinetochores to the spindle poles before their re-orientation on the spindle in early mitosis and allows microtubule depolymerization to pull chromosomes apart and resist detachment during anaphase (PubMed:16079914, PubMed:20624975). Kinetochores, consisting of a centromere-associated inner segment and a microtubule-contacting outer segment, play a crucial role in chromosome segregation by mediating the physical connection between centromeric DNA and microtubules (PubMed:16079914, PubMed:20624975). Kinetochores also serve as an input point for the spindle assembly checkpoint, which delays anaphase until all chromosomes have bioriented on the mitotic spindle (PubMed:16079915). The DASH complex mediates bipolar kinetochore-microtubule attachments and facilitates the formation of additional interactions between outer kinetochore components and spindle microtubules (PubMed:16079914). During chromosome movement along the microtubule, it is required both for the sliding of kinetochores along the lateral side of the microtubule and also for microtubule end-on pulling on the kinetochore (PubMed:18256284). Modulates cytoplasmic microtubule dynamics by tracking the plus-end of shortening microtubules and slowing their depolymerization (PubMed:20624975). As a constitutive component of the kinetochore, mediates interaction between the DASH and sim4 complexes leading to loading of DASH onto the kinetochore (PubMed:16079914, PubMed:16079915).</text>
</comment>
<comment type="subunit">
    <text evidence="1 2 5">Component of the DASH complex consisting of ask1, dad1, dad2, dad3, dad4, dam1, duo1, dad5, spc19 and spc34, with a stoichiometry of one copy of each subunit per complex (PubMed:16079914). Multiple DASH complexes oligomerize to form a ring that encircles spindle microtubules and organizes the rod-like NDC80 complexes of the outer kinetochore (By similarity). DASH complex oligomerization strengthens microtubule attachments (By similarity). On cytoplasmic microtubules, DASH complexes appear to form patches instead of rings (PubMed:20624975). Interacts with sim4 (PubMed:16079914).</text>
</comment>
<comment type="subcellular location">
    <subcellularLocation>
        <location evidence="2 3">Nucleus</location>
    </subcellularLocation>
    <subcellularLocation>
        <location evidence="2">Cytoplasm</location>
        <location evidence="2">Cytoskeleton</location>
        <location evidence="2">Spindle</location>
    </subcellularLocation>
    <subcellularLocation>
        <location evidence="2 3">Chromosome</location>
        <location evidence="2 3">Centromere</location>
        <location evidence="2 3">Kinetochore</location>
    </subcellularLocation>
    <subcellularLocation>
        <location evidence="7">Cytoplasm</location>
        <location evidence="7">Cytoskeleton</location>
    </subcellularLocation>
    <text evidence="2 3 7">Associates with the mitotic spindle and the kinetochore (PubMed:16079914). Unlike the other DASH complex members, dad1 remains associated with the kinetochore throughout the cell cycle (PubMed:16079914, PubMed:16079915). In the cytoskeleton, localizes to cortical microtubules (Probable).</text>
</comment>
<comment type="similarity">
    <text evidence="6">Belongs to the DASH complex DAD1 family.</text>
</comment>
<organism>
    <name type="scientific">Schizosaccharomyces pombe (strain 972 / ATCC 24843)</name>
    <name type="common">Fission yeast</name>
    <dbReference type="NCBI Taxonomy" id="284812"/>
    <lineage>
        <taxon>Eukaryota</taxon>
        <taxon>Fungi</taxon>
        <taxon>Dikarya</taxon>
        <taxon>Ascomycota</taxon>
        <taxon>Taphrinomycotina</taxon>
        <taxon>Schizosaccharomycetes</taxon>
        <taxon>Schizosaccharomycetales</taxon>
        <taxon>Schizosaccharomycetaceae</taxon>
        <taxon>Schizosaccharomyces</taxon>
    </lineage>
</organism>
<proteinExistence type="evidence at protein level"/>